<feature type="chain" id="PRO_0000133445" description="Protein E7">
    <location>
        <begin position="1"/>
        <end position="103"/>
    </location>
</feature>
<feature type="zinc finger region" evidence="1">
    <location>
        <begin position="57"/>
        <end position="94"/>
    </location>
</feature>
<feature type="region of interest" description="E7 terminal domain" evidence="1">
    <location>
        <begin position="1"/>
        <end position="47"/>
    </location>
</feature>
<feature type="short sequence motif" description="LXCXE motif; interaction with host RB1 and TMEM173/STING" evidence="1">
    <location>
        <begin position="23"/>
        <end position="27"/>
    </location>
</feature>
<feature type="short sequence motif" description="Nuclear export signal" evidence="1">
    <location>
        <begin position="76"/>
        <end position="84"/>
    </location>
</feature>
<keyword id="KW-0010">Activator</keyword>
<keyword id="KW-0238">DNA-binding</keyword>
<keyword id="KW-0244">Early protein</keyword>
<keyword id="KW-1078">G1/S host cell cycle checkpoint dysregulation by virus</keyword>
<keyword id="KW-1035">Host cytoplasm</keyword>
<keyword id="KW-1048">Host nucleus</keyword>
<keyword id="KW-0945">Host-virus interaction</keyword>
<keyword id="KW-1090">Inhibition of host innate immune response by virus</keyword>
<keyword id="KW-1114">Inhibition of host interferon signaling pathway by virus</keyword>
<keyword id="KW-0922">Interferon antiviral system evasion</keyword>
<keyword id="KW-0479">Metal-binding</keyword>
<keyword id="KW-1121">Modulation of host cell cycle by virus</keyword>
<keyword id="KW-0553">Oncogene</keyword>
<keyword id="KW-0804">Transcription</keyword>
<keyword id="KW-0805">Transcription regulation</keyword>
<keyword id="KW-0899">Viral immunoevasion</keyword>
<keyword id="KW-0862">Zinc</keyword>
<keyword id="KW-0863">Zinc-finger</keyword>
<organismHost>
    <name type="scientific">Homo sapiens</name>
    <name type="common">Human</name>
    <dbReference type="NCBI Taxonomy" id="9606"/>
</organismHost>
<accession>P36830</accession>
<sequence>MIGKEVTIPDIILQEEFGQPIDLQCYENLTAEAPAEQELEAEEELIQGIPYKVIATCGGGCGARLRVFVLATDAAIRSFQELLLEELQFLCPQCREEIRNGGR</sequence>
<dbReference type="EMBL" id="X74480">
    <property type="protein sequence ID" value="CAA52580.1"/>
    <property type="molecule type" value="Genomic_DNA"/>
</dbReference>
<dbReference type="PIR" id="S36568">
    <property type="entry name" value="S36568"/>
</dbReference>
<dbReference type="RefSeq" id="NP_041833.1">
    <property type="nucleotide sequence ID" value="NC_001591.1"/>
</dbReference>
<dbReference type="SMR" id="P36830"/>
<dbReference type="GeneID" id="1489445"/>
<dbReference type="KEGG" id="vg:1489445"/>
<dbReference type="OrthoDB" id="28045at10239"/>
<dbReference type="Proteomes" id="UP000009124">
    <property type="component" value="Genome"/>
</dbReference>
<dbReference type="GO" id="GO:0030430">
    <property type="term" value="C:host cell cytoplasm"/>
    <property type="evidence" value="ECO:0007669"/>
    <property type="project" value="UniProtKB-SubCell"/>
</dbReference>
<dbReference type="GO" id="GO:0042025">
    <property type="term" value="C:host cell nucleus"/>
    <property type="evidence" value="ECO:0007669"/>
    <property type="project" value="UniProtKB-SubCell"/>
</dbReference>
<dbReference type="GO" id="GO:0003677">
    <property type="term" value="F:DNA binding"/>
    <property type="evidence" value="ECO:0007669"/>
    <property type="project" value="UniProtKB-UniRule"/>
</dbReference>
<dbReference type="GO" id="GO:0003700">
    <property type="term" value="F:DNA-binding transcription factor activity"/>
    <property type="evidence" value="ECO:0007669"/>
    <property type="project" value="UniProtKB-UniRule"/>
</dbReference>
<dbReference type="GO" id="GO:0019904">
    <property type="term" value="F:protein domain specific binding"/>
    <property type="evidence" value="ECO:0007669"/>
    <property type="project" value="UniProtKB-UniRule"/>
</dbReference>
<dbReference type="GO" id="GO:0008270">
    <property type="term" value="F:zinc ion binding"/>
    <property type="evidence" value="ECO:0007669"/>
    <property type="project" value="UniProtKB-KW"/>
</dbReference>
<dbReference type="GO" id="GO:0006351">
    <property type="term" value="P:DNA-templated transcription"/>
    <property type="evidence" value="ECO:0007669"/>
    <property type="project" value="UniProtKB-UniRule"/>
</dbReference>
<dbReference type="GO" id="GO:0039645">
    <property type="term" value="P:symbiont-mediated perturbation of host cell cycle G1/S transition checkpoint"/>
    <property type="evidence" value="ECO:0007669"/>
    <property type="project" value="UniProtKB-UniRule"/>
</dbReference>
<dbReference type="GO" id="GO:0052170">
    <property type="term" value="P:symbiont-mediated suppression of host innate immune response"/>
    <property type="evidence" value="ECO:0007669"/>
    <property type="project" value="UniProtKB-KW"/>
</dbReference>
<dbReference type="GO" id="GO:0039502">
    <property type="term" value="P:symbiont-mediated suppression of host type I interferon-mediated signaling pathway"/>
    <property type="evidence" value="ECO:0007669"/>
    <property type="project" value="UniProtKB-UniRule"/>
</dbReference>
<dbReference type="Gene3D" id="3.30.160.330">
    <property type="match status" value="1"/>
</dbReference>
<dbReference type="HAMAP" id="MF_04004">
    <property type="entry name" value="PPV_E7"/>
    <property type="match status" value="1"/>
</dbReference>
<dbReference type="InterPro" id="IPR000148">
    <property type="entry name" value="Papilloma_E7"/>
</dbReference>
<dbReference type="Pfam" id="PF00527">
    <property type="entry name" value="E7"/>
    <property type="match status" value="1"/>
</dbReference>
<dbReference type="PIRSF" id="PIRSF003407">
    <property type="entry name" value="Papvi_E7"/>
    <property type="match status" value="1"/>
</dbReference>
<dbReference type="SUPFAM" id="SSF161234">
    <property type="entry name" value="E7 C-terminal domain-like"/>
    <property type="match status" value="1"/>
</dbReference>
<proteinExistence type="inferred from homology"/>
<comment type="function">
    <text evidence="1">Plays a role in viral genome replication by driving entry of quiescent cells into the cell cycle. Stimulation of progression from G1 to S phase allows the virus to efficiently use the cellular DNA replicating machinery to achieve viral genome replication. E7 protein has both transforming and trans-activating activities. Induces the disassembly of the E2F1 transcription factor from RB1, with subsequent transcriptional activation of E2F1-regulated S-phase genes. Interferes with host histone deacetylation mediated by HDAC1 and HDAC2, leading to transcription activation. Also plays a role in the inhibition of both antiviral and antiproliferative functions of host interferon alpha. Interaction with host TMEM173/STING impairs the ability of TMEM173/STING to sense cytosolic DNA and promote the production of type I interferon (IFN-alpha and IFN-beta).</text>
</comment>
<comment type="subunit">
    <text evidence="1">Homodimer. Homooligomer. Interacts with host RB1; this interaction induces dissociation of RB1-E2F1 complex thereby disrupting RB1 activity. Interacts with host EP300; this interaction represses EP300 transcriptional activity. Interacts with protein E2; this interaction inhibits E7 oncogenic activity. Interacts with host TMEM173/STING; this interaction impairs the ability of TMEM173/STING to sense cytosolic DNA and promote the production of type I interferon (IFN-alpha and IFN-beta).</text>
</comment>
<comment type="subcellular location">
    <subcellularLocation>
        <location evidence="1">Host cytoplasm</location>
    </subcellularLocation>
    <subcellularLocation>
        <location evidence="1">Host nucleus</location>
    </subcellularLocation>
    <text evidence="1">Predominantly found in the host nucleus.</text>
</comment>
<comment type="domain">
    <text evidence="1">The E7 terminal domain is an intrinsically disordered domain, whose flexibility and conformational transitions confer target adaptability to the oncoprotein. It allows adaptation to a variety of protein targets and exposes the PEST degradation sequence that regulates its turnover in the cell.</text>
</comment>
<comment type="PTM">
    <text evidence="1">Highly phosphorylated.</text>
</comment>
<comment type="similarity">
    <text evidence="1">Belongs to the papillomaviridae E7 protein family.</text>
</comment>
<evidence type="ECO:0000255" key="1">
    <source>
        <dbReference type="HAMAP-Rule" id="MF_04004"/>
    </source>
</evidence>
<protein>
    <recommendedName>
        <fullName evidence="1">Protein E7</fullName>
    </recommendedName>
</protein>
<name>VE7_HPV49</name>
<reference key="1">
    <citation type="journal article" date="1994" name="Curr. Top. Microbiol. Immunol.">
        <title>Primer-directed sequencing of human papillomavirus types.</title>
        <authorList>
            <person name="Delius H."/>
            <person name="Hofmann B."/>
        </authorList>
    </citation>
    <scope>NUCLEOTIDE SEQUENCE [GENOMIC DNA]</scope>
</reference>
<reference key="2">
    <citation type="journal article" date="2002" name="Rev. Med. Virol.">
        <title>Interactions of SV40 large T antigen and other viral proteins with retinoblastoma tumour suppressor.</title>
        <authorList>
            <person name="Lee C."/>
            <person name="Cho Y."/>
        </authorList>
    </citation>
    <scope>REVIEW</scope>
</reference>
<gene>
    <name evidence="1" type="primary">E7</name>
</gene>
<organism>
    <name type="scientific">Human papillomavirus type 49</name>
    <dbReference type="NCBI Taxonomy" id="10616"/>
    <lineage>
        <taxon>Viruses</taxon>
        <taxon>Monodnaviria</taxon>
        <taxon>Shotokuvirae</taxon>
        <taxon>Cossaviricota</taxon>
        <taxon>Papovaviricetes</taxon>
        <taxon>Zurhausenvirales</taxon>
        <taxon>Papillomaviridae</taxon>
        <taxon>Firstpapillomavirinae</taxon>
        <taxon>Betapapillomavirus</taxon>
        <taxon>Betapapillomavirus 3</taxon>
    </lineage>
</organism>